<name>OST2_SCHPO</name>
<accession>O14238</accession>
<dbReference type="EMBL" id="CU329670">
    <property type="protein sequence ID" value="CAB11729.1"/>
    <property type="molecule type" value="Genomic_DNA"/>
</dbReference>
<dbReference type="PIR" id="T39039">
    <property type="entry name" value="T39039"/>
</dbReference>
<dbReference type="RefSeq" id="NP_593898.1">
    <property type="nucleotide sequence ID" value="NM_001019328.2"/>
</dbReference>
<dbReference type="SMR" id="O14238"/>
<dbReference type="BioGRID" id="278586">
    <property type="interactions" value="1"/>
</dbReference>
<dbReference type="ComplexPortal" id="CPX-10061">
    <property type="entry name" value="Oligosaccharyltransferase complex"/>
</dbReference>
<dbReference type="FunCoup" id="O14238">
    <property type="interactions" value="385"/>
</dbReference>
<dbReference type="STRING" id="284812.O14238"/>
<dbReference type="iPTMnet" id="O14238"/>
<dbReference type="PaxDb" id="4896-SPAC6F6.05.1"/>
<dbReference type="EnsemblFungi" id="SPAC6F6.05.1">
    <property type="protein sequence ID" value="SPAC6F6.05.1:pep"/>
    <property type="gene ID" value="SPAC6F6.05"/>
</dbReference>
<dbReference type="GeneID" id="2542110"/>
<dbReference type="KEGG" id="spo:2542110"/>
<dbReference type="PomBase" id="SPAC6F6.05">
    <property type="gene designation" value="ost2"/>
</dbReference>
<dbReference type="VEuPathDB" id="FungiDB:SPAC6F6.05"/>
<dbReference type="eggNOG" id="KOG1746">
    <property type="taxonomic scope" value="Eukaryota"/>
</dbReference>
<dbReference type="HOGENOM" id="CLU_111220_2_1_1"/>
<dbReference type="InParanoid" id="O14238"/>
<dbReference type="OMA" id="HIILHIV"/>
<dbReference type="PhylomeDB" id="O14238"/>
<dbReference type="UniPathway" id="UPA00378"/>
<dbReference type="PRO" id="PR:O14238"/>
<dbReference type="Proteomes" id="UP000002485">
    <property type="component" value="Chromosome I"/>
</dbReference>
<dbReference type="GO" id="GO:0005829">
    <property type="term" value="C:cytosol"/>
    <property type="evidence" value="ECO:0007005"/>
    <property type="project" value="PomBase"/>
</dbReference>
<dbReference type="GO" id="GO:0005634">
    <property type="term" value="C:nucleus"/>
    <property type="evidence" value="ECO:0007005"/>
    <property type="project" value="PomBase"/>
</dbReference>
<dbReference type="GO" id="GO:0008250">
    <property type="term" value="C:oligosaccharyltransferase complex"/>
    <property type="evidence" value="ECO:0000318"/>
    <property type="project" value="GO_Central"/>
</dbReference>
<dbReference type="GO" id="GO:0006487">
    <property type="term" value="P:protein N-linked glycosylation"/>
    <property type="evidence" value="ECO:0000318"/>
    <property type="project" value="GO_Central"/>
</dbReference>
<dbReference type="InterPro" id="IPR003038">
    <property type="entry name" value="DAD/Ost2"/>
</dbReference>
<dbReference type="PANTHER" id="PTHR10705">
    <property type="entry name" value="DOLICHYL-DIPHOSPHOOLIGOSACCHARIDE--PROTEIN GLYCOSYLTRANSFERASE SUBUNIT DAD1"/>
    <property type="match status" value="1"/>
</dbReference>
<dbReference type="PANTHER" id="PTHR10705:SF0">
    <property type="entry name" value="DOLICHYL-DIPHOSPHOOLIGOSACCHARIDE--PROTEIN GLYCOSYLTRANSFERASE SUBUNIT DAD1"/>
    <property type="match status" value="1"/>
</dbReference>
<dbReference type="Pfam" id="PF02109">
    <property type="entry name" value="DAD"/>
    <property type="match status" value="1"/>
</dbReference>
<dbReference type="PIRSF" id="PIRSF005588">
    <property type="entry name" value="DAD"/>
    <property type="match status" value="1"/>
</dbReference>
<comment type="function">
    <text evidence="2">Subunit of the oligosaccharyl transferase (OST) complex that catalyzes the initial transfer of a defined glycan (Glc(3)Man(9)GlcNAc(2) in eukaryotes) from the lipid carrier dolichol-pyrophosphate to an asparagine residue within an Asn-X-Ser/Thr consensus motif in nascent polypeptide chains, the first step in protein N-glycosylation. N-glycosylation occurs cotranslationally and the complex associates with the Sec61 complex at the channel-forming translocon complex that mediates protein translocation across the endoplasmic reticulum (ER). All subunits are required for a maximal enzyme activity.</text>
</comment>
<comment type="pathway">
    <text>Protein modification; protein glycosylation.</text>
</comment>
<comment type="subunit">
    <text evidence="2">Component of the oligosaccharyltransferase (OST) complex.</text>
</comment>
<comment type="subcellular location">
    <subcellularLocation>
        <location evidence="1">Endoplasmic reticulum membrane</location>
        <topology evidence="1">Multi-pass membrane protein</topology>
    </subcellularLocation>
</comment>
<comment type="similarity">
    <text evidence="4">Belongs to the DAD/OST2 family.</text>
</comment>
<protein>
    <recommendedName>
        <fullName>Probable dolichyl-diphosphooligosaccharide--protein glycosyltransferase subunit ost2</fullName>
    </recommendedName>
    <alternativeName>
        <fullName>Oligosaccharyl transferase 16 kDa subunit</fullName>
    </alternativeName>
    <alternativeName>
        <fullName>Oligosaccharyl transferase subunit epsilon</fullName>
    </alternativeName>
</protein>
<proteinExistence type="inferred from homology"/>
<sequence length="122" mass="13334">MSSKSGLFLPLSSVITSYNENTNLSLKTIDAFLGFLVVVGGLQFGYALLVGTYPFNSFLSGFISCVGQFVITVGFRMALTQQELQSSSSKKKSPVVSPYKRAFLEFCFSSLVLHFFAVNFLG</sequence>
<keyword id="KW-0256">Endoplasmic reticulum</keyword>
<keyword id="KW-0472">Membrane</keyword>
<keyword id="KW-1185">Reference proteome</keyword>
<keyword id="KW-0812">Transmembrane</keyword>
<keyword id="KW-1133">Transmembrane helix</keyword>
<feature type="chain" id="PRO_0000124031" description="Probable dolichyl-diphosphooligosaccharide--protein glycosyltransferase subunit ost2">
    <location>
        <begin position="1"/>
        <end position="122"/>
    </location>
</feature>
<feature type="topological domain" description="Cytoplasmic" evidence="3">
    <location>
        <begin position="1"/>
        <end position="30"/>
    </location>
</feature>
<feature type="transmembrane region" description="Helical" evidence="3">
    <location>
        <begin position="31"/>
        <end position="51"/>
    </location>
</feature>
<feature type="topological domain" description="Lumenal" evidence="3">
    <location>
        <begin position="52"/>
        <end position="54"/>
    </location>
</feature>
<feature type="transmembrane region" description="Helical" evidence="3">
    <location>
        <begin position="55"/>
        <end position="75"/>
    </location>
</feature>
<feature type="topological domain" description="Cytoplasmic" evidence="3">
    <location>
        <begin position="76"/>
        <end position="101"/>
    </location>
</feature>
<feature type="transmembrane region" description="Helical" evidence="3">
    <location>
        <begin position="102"/>
        <end position="122"/>
    </location>
</feature>
<reference key="1">
    <citation type="journal article" date="2002" name="Nature">
        <title>The genome sequence of Schizosaccharomyces pombe.</title>
        <authorList>
            <person name="Wood V."/>
            <person name="Gwilliam R."/>
            <person name="Rajandream M.A."/>
            <person name="Lyne M.H."/>
            <person name="Lyne R."/>
            <person name="Stewart A."/>
            <person name="Sgouros J.G."/>
            <person name="Peat N."/>
            <person name="Hayles J."/>
            <person name="Baker S.G."/>
            <person name="Basham D."/>
            <person name="Bowman S."/>
            <person name="Brooks K."/>
            <person name="Brown D."/>
            <person name="Brown S."/>
            <person name="Chillingworth T."/>
            <person name="Churcher C.M."/>
            <person name="Collins M."/>
            <person name="Connor R."/>
            <person name="Cronin A."/>
            <person name="Davis P."/>
            <person name="Feltwell T."/>
            <person name="Fraser A."/>
            <person name="Gentles S."/>
            <person name="Goble A."/>
            <person name="Hamlin N."/>
            <person name="Harris D.E."/>
            <person name="Hidalgo J."/>
            <person name="Hodgson G."/>
            <person name="Holroyd S."/>
            <person name="Hornsby T."/>
            <person name="Howarth S."/>
            <person name="Huckle E.J."/>
            <person name="Hunt S."/>
            <person name="Jagels K."/>
            <person name="James K.D."/>
            <person name="Jones L."/>
            <person name="Jones M."/>
            <person name="Leather S."/>
            <person name="McDonald S."/>
            <person name="McLean J."/>
            <person name="Mooney P."/>
            <person name="Moule S."/>
            <person name="Mungall K.L."/>
            <person name="Murphy L.D."/>
            <person name="Niblett D."/>
            <person name="Odell C."/>
            <person name="Oliver K."/>
            <person name="O'Neil S."/>
            <person name="Pearson D."/>
            <person name="Quail M.A."/>
            <person name="Rabbinowitsch E."/>
            <person name="Rutherford K.M."/>
            <person name="Rutter S."/>
            <person name="Saunders D."/>
            <person name="Seeger K."/>
            <person name="Sharp S."/>
            <person name="Skelton J."/>
            <person name="Simmonds M.N."/>
            <person name="Squares R."/>
            <person name="Squares S."/>
            <person name="Stevens K."/>
            <person name="Taylor K."/>
            <person name="Taylor R.G."/>
            <person name="Tivey A."/>
            <person name="Walsh S.V."/>
            <person name="Warren T."/>
            <person name="Whitehead S."/>
            <person name="Woodward J.R."/>
            <person name="Volckaert G."/>
            <person name="Aert R."/>
            <person name="Robben J."/>
            <person name="Grymonprez B."/>
            <person name="Weltjens I."/>
            <person name="Vanstreels E."/>
            <person name="Rieger M."/>
            <person name="Schaefer M."/>
            <person name="Mueller-Auer S."/>
            <person name="Gabel C."/>
            <person name="Fuchs M."/>
            <person name="Duesterhoeft A."/>
            <person name="Fritzc C."/>
            <person name="Holzer E."/>
            <person name="Moestl D."/>
            <person name="Hilbert H."/>
            <person name="Borzym K."/>
            <person name="Langer I."/>
            <person name="Beck A."/>
            <person name="Lehrach H."/>
            <person name="Reinhardt R."/>
            <person name="Pohl T.M."/>
            <person name="Eger P."/>
            <person name="Zimmermann W."/>
            <person name="Wedler H."/>
            <person name="Wambutt R."/>
            <person name="Purnelle B."/>
            <person name="Goffeau A."/>
            <person name="Cadieu E."/>
            <person name="Dreano S."/>
            <person name="Gloux S."/>
            <person name="Lelaure V."/>
            <person name="Mottier S."/>
            <person name="Galibert F."/>
            <person name="Aves S.J."/>
            <person name="Xiang Z."/>
            <person name="Hunt C."/>
            <person name="Moore K."/>
            <person name="Hurst S.M."/>
            <person name="Lucas M."/>
            <person name="Rochet M."/>
            <person name="Gaillardin C."/>
            <person name="Tallada V.A."/>
            <person name="Garzon A."/>
            <person name="Thode G."/>
            <person name="Daga R.R."/>
            <person name="Cruzado L."/>
            <person name="Jimenez J."/>
            <person name="Sanchez M."/>
            <person name="del Rey F."/>
            <person name="Benito J."/>
            <person name="Dominguez A."/>
            <person name="Revuelta J.L."/>
            <person name="Moreno S."/>
            <person name="Armstrong J."/>
            <person name="Forsburg S.L."/>
            <person name="Cerutti L."/>
            <person name="Lowe T."/>
            <person name="McCombie W.R."/>
            <person name="Paulsen I."/>
            <person name="Potashkin J."/>
            <person name="Shpakovski G.V."/>
            <person name="Ussery D."/>
            <person name="Barrell B.G."/>
            <person name="Nurse P."/>
        </authorList>
    </citation>
    <scope>NUCLEOTIDE SEQUENCE [LARGE SCALE GENOMIC DNA]</scope>
    <source>
        <strain>972 / ATCC 24843</strain>
    </source>
</reference>
<evidence type="ECO:0000250" key="1"/>
<evidence type="ECO:0000250" key="2">
    <source>
        <dbReference type="UniProtKB" id="P46964"/>
    </source>
</evidence>
<evidence type="ECO:0000255" key="3"/>
<evidence type="ECO:0000305" key="4"/>
<gene>
    <name type="primary">ost2</name>
    <name type="ORF">SPAC6F6.05</name>
</gene>
<organism>
    <name type="scientific">Schizosaccharomyces pombe (strain 972 / ATCC 24843)</name>
    <name type="common">Fission yeast</name>
    <dbReference type="NCBI Taxonomy" id="284812"/>
    <lineage>
        <taxon>Eukaryota</taxon>
        <taxon>Fungi</taxon>
        <taxon>Dikarya</taxon>
        <taxon>Ascomycota</taxon>
        <taxon>Taphrinomycotina</taxon>
        <taxon>Schizosaccharomycetes</taxon>
        <taxon>Schizosaccharomycetales</taxon>
        <taxon>Schizosaccharomycetaceae</taxon>
        <taxon>Schizosaccharomyces</taxon>
    </lineage>
</organism>